<gene>
    <name evidence="1" type="primary">adk</name>
    <name type="ordered locus">ACIAD1105</name>
</gene>
<proteinExistence type="inferred from homology"/>
<accession>Q6FD71</accession>
<reference key="1">
    <citation type="journal article" date="2004" name="Nucleic Acids Res.">
        <title>Unique features revealed by the genome sequence of Acinetobacter sp. ADP1, a versatile and naturally transformation competent bacterium.</title>
        <authorList>
            <person name="Barbe V."/>
            <person name="Vallenet D."/>
            <person name="Fonknechten N."/>
            <person name="Kreimeyer A."/>
            <person name="Oztas S."/>
            <person name="Labarre L."/>
            <person name="Cruveiller S."/>
            <person name="Robert C."/>
            <person name="Duprat S."/>
            <person name="Wincker P."/>
            <person name="Ornston L.N."/>
            <person name="Weissenbach J."/>
            <person name="Marliere P."/>
            <person name="Cohen G.N."/>
            <person name="Medigue C."/>
        </authorList>
    </citation>
    <scope>NUCLEOTIDE SEQUENCE [LARGE SCALE GENOMIC DNA]</scope>
    <source>
        <strain>ATCC 33305 / BD413 / ADP1</strain>
    </source>
</reference>
<evidence type="ECO:0000255" key="1">
    <source>
        <dbReference type="HAMAP-Rule" id="MF_00235"/>
    </source>
</evidence>
<protein>
    <recommendedName>
        <fullName evidence="1">Adenylate kinase</fullName>
        <shortName evidence="1">AK</shortName>
        <ecNumber evidence="1">2.7.4.3</ecNumber>
    </recommendedName>
    <alternativeName>
        <fullName evidence="1">ATP-AMP transphosphorylase</fullName>
    </alternativeName>
    <alternativeName>
        <fullName evidence="1">ATP:AMP phosphotransferase</fullName>
    </alternativeName>
    <alternativeName>
        <fullName evidence="1">Adenylate monophosphate kinase</fullName>
    </alternativeName>
</protein>
<comment type="function">
    <text evidence="1">Catalyzes the reversible transfer of the terminal phosphate group between ATP and AMP. Plays an important role in cellular energy homeostasis and in adenine nucleotide metabolism.</text>
</comment>
<comment type="catalytic activity">
    <reaction evidence="1">
        <text>AMP + ATP = 2 ADP</text>
        <dbReference type="Rhea" id="RHEA:12973"/>
        <dbReference type="ChEBI" id="CHEBI:30616"/>
        <dbReference type="ChEBI" id="CHEBI:456215"/>
        <dbReference type="ChEBI" id="CHEBI:456216"/>
        <dbReference type="EC" id="2.7.4.3"/>
    </reaction>
</comment>
<comment type="pathway">
    <text evidence="1">Purine metabolism; AMP biosynthesis via salvage pathway; AMP from ADP: step 1/1.</text>
</comment>
<comment type="subunit">
    <text evidence="1">Monomer.</text>
</comment>
<comment type="subcellular location">
    <subcellularLocation>
        <location evidence="1">Cytoplasm</location>
    </subcellularLocation>
</comment>
<comment type="domain">
    <text evidence="1">Consists of three domains, a large central CORE domain and two small peripheral domains, NMPbind and LID, which undergo movements during catalysis. The LID domain closes over the site of phosphoryl transfer upon ATP binding. Assembling and dissambling the active center during each catalytic cycle provides an effective means to prevent ATP hydrolysis.</text>
</comment>
<comment type="similarity">
    <text evidence="1">Belongs to the adenylate kinase family.</text>
</comment>
<dbReference type="EC" id="2.7.4.3" evidence="1"/>
<dbReference type="EMBL" id="CR543861">
    <property type="protein sequence ID" value="CAG67988.1"/>
    <property type="molecule type" value="Genomic_DNA"/>
</dbReference>
<dbReference type="RefSeq" id="WP_004921527.1">
    <property type="nucleotide sequence ID" value="NC_005966.1"/>
</dbReference>
<dbReference type="SMR" id="Q6FD71"/>
<dbReference type="STRING" id="202950.GCA_001485005_01264"/>
<dbReference type="GeneID" id="45233539"/>
<dbReference type="KEGG" id="aci:ACIAD1105"/>
<dbReference type="eggNOG" id="COG0563">
    <property type="taxonomic scope" value="Bacteria"/>
</dbReference>
<dbReference type="HOGENOM" id="CLU_032354_1_2_6"/>
<dbReference type="OrthoDB" id="9805030at2"/>
<dbReference type="BioCyc" id="ASP62977:ACIAD_RS05075-MONOMER"/>
<dbReference type="UniPathway" id="UPA00588">
    <property type="reaction ID" value="UER00649"/>
</dbReference>
<dbReference type="Proteomes" id="UP000000430">
    <property type="component" value="Chromosome"/>
</dbReference>
<dbReference type="GO" id="GO:0005737">
    <property type="term" value="C:cytoplasm"/>
    <property type="evidence" value="ECO:0007669"/>
    <property type="project" value="UniProtKB-SubCell"/>
</dbReference>
<dbReference type="GO" id="GO:0004017">
    <property type="term" value="F:adenylate kinase activity"/>
    <property type="evidence" value="ECO:0007669"/>
    <property type="project" value="UniProtKB-UniRule"/>
</dbReference>
<dbReference type="GO" id="GO:0005524">
    <property type="term" value="F:ATP binding"/>
    <property type="evidence" value="ECO:0007669"/>
    <property type="project" value="UniProtKB-UniRule"/>
</dbReference>
<dbReference type="GO" id="GO:0044209">
    <property type="term" value="P:AMP salvage"/>
    <property type="evidence" value="ECO:0007669"/>
    <property type="project" value="UniProtKB-UniRule"/>
</dbReference>
<dbReference type="CDD" id="cd01428">
    <property type="entry name" value="ADK"/>
    <property type="match status" value="1"/>
</dbReference>
<dbReference type="FunFam" id="3.40.50.300:FF:000106">
    <property type="entry name" value="Adenylate kinase mitochondrial"/>
    <property type="match status" value="1"/>
</dbReference>
<dbReference type="Gene3D" id="3.40.50.300">
    <property type="entry name" value="P-loop containing nucleotide triphosphate hydrolases"/>
    <property type="match status" value="1"/>
</dbReference>
<dbReference type="HAMAP" id="MF_00235">
    <property type="entry name" value="Adenylate_kinase_Adk"/>
    <property type="match status" value="1"/>
</dbReference>
<dbReference type="InterPro" id="IPR006259">
    <property type="entry name" value="Adenyl_kin_sub"/>
</dbReference>
<dbReference type="InterPro" id="IPR000850">
    <property type="entry name" value="Adenylat/UMP-CMP_kin"/>
</dbReference>
<dbReference type="InterPro" id="IPR033690">
    <property type="entry name" value="Adenylat_kinase_CS"/>
</dbReference>
<dbReference type="InterPro" id="IPR007862">
    <property type="entry name" value="Adenylate_kinase_lid-dom"/>
</dbReference>
<dbReference type="InterPro" id="IPR027417">
    <property type="entry name" value="P-loop_NTPase"/>
</dbReference>
<dbReference type="NCBIfam" id="TIGR01351">
    <property type="entry name" value="adk"/>
    <property type="match status" value="1"/>
</dbReference>
<dbReference type="NCBIfam" id="NF001379">
    <property type="entry name" value="PRK00279.1-1"/>
    <property type="match status" value="1"/>
</dbReference>
<dbReference type="NCBIfam" id="NF001380">
    <property type="entry name" value="PRK00279.1-2"/>
    <property type="match status" value="1"/>
</dbReference>
<dbReference type="NCBIfam" id="NF001381">
    <property type="entry name" value="PRK00279.1-3"/>
    <property type="match status" value="1"/>
</dbReference>
<dbReference type="NCBIfam" id="NF011100">
    <property type="entry name" value="PRK14527.1"/>
    <property type="match status" value="1"/>
</dbReference>
<dbReference type="PANTHER" id="PTHR23359">
    <property type="entry name" value="NUCLEOTIDE KINASE"/>
    <property type="match status" value="1"/>
</dbReference>
<dbReference type="Pfam" id="PF00406">
    <property type="entry name" value="ADK"/>
    <property type="match status" value="1"/>
</dbReference>
<dbReference type="Pfam" id="PF05191">
    <property type="entry name" value="ADK_lid"/>
    <property type="match status" value="1"/>
</dbReference>
<dbReference type="PRINTS" id="PR00094">
    <property type="entry name" value="ADENYLTKNASE"/>
</dbReference>
<dbReference type="SUPFAM" id="SSF52540">
    <property type="entry name" value="P-loop containing nucleoside triphosphate hydrolases"/>
    <property type="match status" value="1"/>
</dbReference>
<dbReference type="PROSITE" id="PS00113">
    <property type="entry name" value="ADENYLATE_KINASE"/>
    <property type="match status" value="1"/>
</dbReference>
<feature type="chain" id="PRO_0000158714" description="Adenylate kinase">
    <location>
        <begin position="1"/>
        <end position="219"/>
    </location>
</feature>
<feature type="region of interest" description="NMP" evidence="1">
    <location>
        <begin position="30"/>
        <end position="59"/>
    </location>
</feature>
<feature type="region of interest" description="LID" evidence="1">
    <location>
        <begin position="122"/>
        <end position="159"/>
    </location>
</feature>
<feature type="binding site" evidence="1">
    <location>
        <begin position="10"/>
        <end position="15"/>
    </location>
    <ligand>
        <name>ATP</name>
        <dbReference type="ChEBI" id="CHEBI:30616"/>
    </ligand>
</feature>
<feature type="binding site" evidence="1">
    <location>
        <position position="31"/>
    </location>
    <ligand>
        <name>AMP</name>
        <dbReference type="ChEBI" id="CHEBI:456215"/>
    </ligand>
</feature>
<feature type="binding site" evidence="1">
    <location>
        <position position="36"/>
    </location>
    <ligand>
        <name>AMP</name>
        <dbReference type="ChEBI" id="CHEBI:456215"/>
    </ligand>
</feature>
<feature type="binding site" evidence="1">
    <location>
        <begin position="57"/>
        <end position="59"/>
    </location>
    <ligand>
        <name>AMP</name>
        <dbReference type="ChEBI" id="CHEBI:456215"/>
    </ligand>
</feature>
<feature type="binding site" evidence="1">
    <location>
        <begin position="85"/>
        <end position="88"/>
    </location>
    <ligand>
        <name>AMP</name>
        <dbReference type="ChEBI" id="CHEBI:456215"/>
    </ligand>
</feature>
<feature type="binding site" evidence="1">
    <location>
        <position position="92"/>
    </location>
    <ligand>
        <name>AMP</name>
        <dbReference type="ChEBI" id="CHEBI:456215"/>
    </ligand>
</feature>
<feature type="binding site" evidence="1">
    <location>
        <position position="123"/>
    </location>
    <ligand>
        <name>ATP</name>
        <dbReference type="ChEBI" id="CHEBI:30616"/>
    </ligand>
</feature>
<feature type="binding site" evidence="1">
    <location>
        <begin position="132"/>
        <end position="133"/>
    </location>
    <ligand>
        <name>ATP</name>
        <dbReference type="ChEBI" id="CHEBI:30616"/>
    </ligand>
</feature>
<feature type="binding site" evidence="1">
    <location>
        <position position="156"/>
    </location>
    <ligand>
        <name>AMP</name>
        <dbReference type="ChEBI" id="CHEBI:456215"/>
    </ligand>
</feature>
<feature type="binding site" evidence="1">
    <location>
        <position position="167"/>
    </location>
    <ligand>
        <name>AMP</name>
        <dbReference type="ChEBI" id="CHEBI:456215"/>
    </ligand>
</feature>
<feature type="binding site" evidence="1">
    <location>
        <position position="202"/>
    </location>
    <ligand>
        <name>ATP</name>
        <dbReference type="ChEBI" id="CHEBI:30616"/>
    </ligand>
</feature>
<keyword id="KW-0067">ATP-binding</keyword>
<keyword id="KW-0963">Cytoplasm</keyword>
<keyword id="KW-0418">Kinase</keyword>
<keyword id="KW-0545">Nucleotide biosynthesis</keyword>
<keyword id="KW-0547">Nucleotide-binding</keyword>
<keyword id="KW-0808">Transferase</keyword>
<name>KAD_ACIAD</name>
<sequence>MRIILLGPPGAGKGTQAQLICKRYDIPQISTGDMLRAAIREGTELGLKAKSVMESGGLVSDELIIGLVKERIAQPDCENGCIFDGFPRTIPQAEALENAGITIDHVIEIAVPDEEIVKRLSGRRQHPASGRVYHIEYNPPKVEGKDDVTGEELVQRPDDLEETIRKRLGSYHSETEQLVGFYQGRAASGENAPTYNKLDGLRTIDVVQKDLFAILDETK</sequence>
<organism>
    <name type="scientific">Acinetobacter baylyi (strain ATCC 33305 / BD413 / ADP1)</name>
    <dbReference type="NCBI Taxonomy" id="62977"/>
    <lineage>
        <taxon>Bacteria</taxon>
        <taxon>Pseudomonadati</taxon>
        <taxon>Pseudomonadota</taxon>
        <taxon>Gammaproteobacteria</taxon>
        <taxon>Moraxellales</taxon>
        <taxon>Moraxellaceae</taxon>
        <taxon>Acinetobacter</taxon>
    </lineage>
</organism>